<proteinExistence type="inferred from homology"/>
<gene>
    <name evidence="1" type="primary">hemL</name>
    <name type="ordered locus">FTW_0820</name>
</gene>
<accession>A4IXN8</accession>
<comment type="catalytic activity">
    <reaction evidence="1">
        <text>(S)-4-amino-5-oxopentanoate = 5-aminolevulinate</text>
        <dbReference type="Rhea" id="RHEA:14265"/>
        <dbReference type="ChEBI" id="CHEBI:57501"/>
        <dbReference type="ChEBI" id="CHEBI:356416"/>
        <dbReference type="EC" id="5.4.3.8"/>
    </reaction>
</comment>
<comment type="cofactor">
    <cofactor evidence="1">
        <name>pyridoxal 5'-phosphate</name>
        <dbReference type="ChEBI" id="CHEBI:597326"/>
    </cofactor>
</comment>
<comment type="pathway">
    <text evidence="1">Porphyrin-containing compound metabolism; protoporphyrin-IX biosynthesis; 5-aminolevulinate from L-glutamyl-tRNA(Glu): step 2/2.</text>
</comment>
<comment type="subunit">
    <text evidence="1">Homodimer.</text>
</comment>
<comment type="subcellular location">
    <subcellularLocation>
        <location evidence="1">Cytoplasm</location>
    </subcellularLocation>
</comment>
<comment type="similarity">
    <text evidence="1">Belongs to the class-III pyridoxal-phosphate-dependent aminotransferase family. HemL subfamily.</text>
</comment>
<evidence type="ECO:0000255" key="1">
    <source>
        <dbReference type="HAMAP-Rule" id="MF_00375"/>
    </source>
</evidence>
<protein>
    <recommendedName>
        <fullName evidence="1">Glutamate-1-semialdehyde 2,1-aminomutase</fullName>
        <shortName evidence="1">GSA</shortName>
        <ecNumber evidence="1">5.4.3.8</ecNumber>
    </recommendedName>
    <alternativeName>
        <fullName evidence="1">Glutamate-1-semialdehyde aminotransferase</fullName>
        <shortName evidence="1">GSA-AT</shortName>
    </alternativeName>
</protein>
<sequence length="431" mass="47078">MENKSNSQILFAEAQQYIPGGVNSPVRAFKSVGQEFPRFIKFAKGAYLYDVDWNKYIDYIGSWGPMILGHCDDDVLEAIQCQVKNGLSYGAPCKQEVDLAKKIIELMPNIEQVRFVNSGTEATMSAIRLARAYTCRNKIIKFEGCYHGHADEFLVAAGSGALSLGQPNSPGVPEDVVKDTLVASFNDMESIQALFEKYKDEIACIIVEPIAGNMNMIFPQDDFLAKLRAICDQNSSLLIFDEVMTGFRVALGGAQSIYNVKPDLTTLGKVIGGGMPVGAFGGRKEIMQKVSPAGPVYQAGTLSGNPIAMTAGIKTLEKISQPGLFDELGAKAQKLVDGLNEAAKAYDFNFHAKCLGGMFGLFFCSDKIAVNTFVDLGKTNLKMFNQFFAYMLDNGVYLAPSAYEAGFISIAHSDEDIEKTICLAKKFFQEN</sequence>
<dbReference type="EC" id="5.4.3.8" evidence="1"/>
<dbReference type="EMBL" id="CP000608">
    <property type="protein sequence ID" value="ABO46690.1"/>
    <property type="molecule type" value="Genomic_DNA"/>
</dbReference>
<dbReference type="RefSeq" id="WP_003025999.1">
    <property type="nucleotide sequence ID" value="NC_009257.1"/>
</dbReference>
<dbReference type="SMR" id="A4IXN8"/>
<dbReference type="KEGG" id="ftw:FTW_0820"/>
<dbReference type="HOGENOM" id="CLU_016922_1_5_6"/>
<dbReference type="UniPathway" id="UPA00251">
    <property type="reaction ID" value="UER00317"/>
</dbReference>
<dbReference type="GO" id="GO:0005737">
    <property type="term" value="C:cytoplasm"/>
    <property type="evidence" value="ECO:0007669"/>
    <property type="project" value="UniProtKB-SubCell"/>
</dbReference>
<dbReference type="GO" id="GO:0042286">
    <property type="term" value="F:glutamate-1-semialdehyde 2,1-aminomutase activity"/>
    <property type="evidence" value="ECO:0007669"/>
    <property type="project" value="UniProtKB-UniRule"/>
</dbReference>
<dbReference type="GO" id="GO:0030170">
    <property type="term" value="F:pyridoxal phosphate binding"/>
    <property type="evidence" value="ECO:0007669"/>
    <property type="project" value="InterPro"/>
</dbReference>
<dbReference type="GO" id="GO:0008483">
    <property type="term" value="F:transaminase activity"/>
    <property type="evidence" value="ECO:0007669"/>
    <property type="project" value="InterPro"/>
</dbReference>
<dbReference type="GO" id="GO:0006782">
    <property type="term" value="P:protoporphyrinogen IX biosynthetic process"/>
    <property type="evidence" value="ECO:0007669"/>
    <property type="project" value="UniProtKB-UniRule"/>
</dbReference>
<dbReference type="CDD" id="cd00610">
    <property type="entry name" value="OAT_like"/>
    <property type="match status" value="1"/>
</dbReference>
<dbReference type="FunFam" id="3.40.640.10:FF:000021">
    <property type="entry name" value="Glutamate-1-semialdehyde 2,1-aminomutase"/>
    <property type="match status" value="1"/>
</dbReference>
<dbReference type="Gene3D" id="3.90.1150.10">
    <property type="entry name" value="Aspartate Aminotransferase, domain 1"/>
    <property type="match status" value="1"/>
</dbReference>
<dbReference type="Gene3D" id="3.40.640.10">
    <property type="entry name" value="Type I PLP-dependent aspartate aminotransferase-like (Major domain)"/>
    <property type="match status" value="1"/>
</dbReference>
<dbReference type="HAMAP" id="MF_00375">
    <property type="entry name" value="HemL_aminotrans_3"/>
    <property type="match status" value="1"/>
</dbReference>
<dbReference type="InterPro" id="IPR004639">
    <property type="entry name" value="4pyrrol_synth_GluAld_NH2Trfase"/>
</dbReference>
<dbReference type="InterPro" id="IPR005814">
    <property type="entry name" value="Aminotrans_3"/>
</dbReference>
<dbReference type="InterPro" id="IPR049704">
    <property type="entry name" value="Aminotrans_3_PPA_site"/>
</dbReference>
<dbReference type="InterPro" id="IPR015424">
    <property type="entry name" value="PyrdxlP-dep_Trfase"/>
</dbReference>
<dbReference type="InterPro" id="IPR015421">
    <property type="entry name" value="PyrdxlP-dep_Trfase_major"/>
</dbReference>
<dbReference type="InterPro" id="IPR015422">
    <property type="entry name" value="PyrdxlP-dep_Trfase_small"/>
</dbReference>
<dbReference type="NCBIfam" id="TIGR00713">
    <property type="entry name" value="hemL"/>
    <property type="match status" value="1"/>
</dbReference>
<dbReference type="NCBIfam" id="NF000818">
    <property type="entry name" value="PRK00062.1"/>
    <property type="match status" value="1"/>
</dbReference>
<dbReference type="PANTHER" id="PTHR43713">
    <property type="entry name" value="GLUTAMATE-1-SEMIALDEHYDE 2,1-AMINOMUTASE"/>
    <property type="match status" value="1"/>
</dbReference>
<dbReference type="PANTHER" id="PTHR43713:SF3">
    <property type="entry name" value="GLUTAMATE-1-SEMIALDEHYDE 2,1-AMINOMUTASE 1, CHLOROPLASTIC-RELATED"/>
    <property type="match status" value="1"/>
</dbReference>
<dbReference type="Pfam" id="PF00202">
    <property type="entry name" value="Aminotran_3"/>
    <property type="match status" value="1"/>
</dbReference>
<dbReference type="SUPFAM" id="SSF53383">
    <property type="entry name" value="PLP-dependent transferases"/>
    <property type="match status" value="1"/>
</dbReference>
<dbReference type="PROSITE" id="PS00600">
    <property type="entry name" value="AA_TRANSFER_CLASS_3"/>
    <property type="match status" value="1"/>
</dbReference>
<reference key="1">
    <citation type="journal article" date="2007" name="PLoS ONE">
        <title>Complete genomic characterization of a pathogenic A.II strain of Francisella tularensis subspecies tularensis.</title>
        <authorList>
            <person name="Beckstrom-Sternberg S.M."/>
            <person name="Auerbach R.K."/>
            <person name="Godbole S."/>
            <person name="Pearson J.V."/>
            <person name="Beckstrom-Sternberg J.S."/>
            <person name="Deng Z."/>
            <person name="Munk C."/>
            <person name="Kubota K."/>
            <person name="Zhou Y."/>
            <person name="Bruce D."/>
            <person name="Noronha J."/>
            <person name="Scheuermann R.H."/>
            <person name="Wang A."/>
            <person name="Wei X."/>
            <person name="Wang J."/>
            <person name="Hao J."/>
            <person name="Wagner D.M."/>
            <person name="Brettin T.S."/>
            <person name="Brown N."/>
            <person name="Gilna P."/>
            <person name="Keim P.S."/>
        </authorList>
    </citation>
    <scope>NUCLEOTIDE SEQUENCE [LARGE SCALE GENOMIC DNA]</scope>
    <source>
        <strain>WY96-3418</strain>
    </source>
</reference>
<keyword id="KW-0963">Cytoplasm</keyword>
<keyword id="KW-0413">Isomerase</keyword>
<keyword id="KW-0627">Porphyrin biosynthesis</keyword>
<keyword id="KW-0663">Pyridoxal phosphate</keyword>
<feature type="chain" id="PRO_0000300915" description="Glutamate-1-semialdehyde 2,1-aminomutase">
    <location>
        <begin position="1"/>
        <end position="431"/>
    </location>
</feature>
<feature type="modified residue" description="N6-(pyridoxal phosphate)lysine" evidence="1">
    <location>
        <position position="269"/>
    </location>
</feature>
<name>GSA_FRATW</name>
<organism>
    <name type="scientific">Francisella tularensis subsp. tularensis (strain WY96-3418)</name>
    <dbReference type="NCBI Taxonomy" id="418136"/>
    <lineage>
        <taxon>Bacteria</taxon>
        <taxon>Pseudomonadati</taxon>
        <taxon>Pseudomonadota</taxon>
        <taxon>Gammaproteobacteria</taxon>
        <taxon>Thiotrichales</taxon>
        <taxon>Francisellaceae</taxon>
        <taxon>Francisella</taxon>
    </lineage>
</organism>